<name>GGGPS_HYPBU</name>
<reference key="1">
    <citation type="journal article" date="2007" name="Archaea">
        <title>The genome of Hyperthermus butylicus: a sulfur-reducing, peptide fermenting, neutrophilic Crenarchaeote growing up to 108 degrees C.</title>
        <authorList>
            <person name="Bruegger K."/>
            <person name="Chen L."/>
            <person name="Stark M."/>
            <person name="Zibat A."/>
            <person name="Redder P."/>
            <person name="Ruepp A."/>
            <person name="Awayez M."/>
            <person name="She Q."/>
            <person name="Garrett R.A."/>
            <person name="Klenk H.-P."/>
        </authorList>
    </citation>
    <scope>NUCLEOTIDE SEQUENCE [LARGE SCALE GENOMIC DNA]</scope>
    <source>
        <strain>DSM 5456 / JCM 9403 / PLM1-5</strain>
    </source>
</reference>
<protein>
    <recommendedName>
        <fullName evidence="1">Geranylgeranylglyceryl phosphate synthase</fullName>
        <shortName evidence="1">GGGP synthase</shortName>
        <shortName evidence="1">GGGPS</shortName>
        <ecNumber evidence="1">2.5.1.41</ecNumber>
    </recommendedName>
    <alternativeName>
        <fullName evidence="1">(S)-3-O-geranylgeranylglyceryl phosphate synthase</fullName>
    </alternativeName>
    <alternativeName>
        <fullName evidence="1">Phosphoglycerol geranylgeranyltransferase</fullName>
    </alternativeName>
</protein>
<gene>
    <name type="ordered locus">Hbut_0005</name>
</gene>
<accession>A2BIS8</accession>
<evidence type="ECO:0000255" key="1">
    <source>
        <dbReference type="HAMAP-Rule" id="MF_00112"/>
    </source>
</evidence>
<dbReference type="EC" id="2.5.1.41" evidence="1"/>
<dbReference type="EMBL" id="CP000493">
    <property type="protein sequence ID" value="ABM79884.1"/>
    <property type="molecule type" value="Genomic_DNA"/>
</dbReference>
<dbReference type="SMR" id="A2BIS8"/>
<dbReference type="STRING" id="415426.Hbut_0005"/>
<dbReference type="EnsemblBacteria" id="ABM79884">
    <property type="protein sequence ID" value="ABM79884"/>
    <property type="gene ID" value="Hbut_0005"/>
</dbReference>
<dbReference type="KEGG" id="hbu:Hbut_0005"/>
<dbReference type="eggNOG" id="arCOG01085">
    <property type="taxonomic scope" value="Archaea"/>
</dbReference>
<dbReference type="HOGENOM" id="CLU_068610_0_0_2"/>
<dbReference type="OrthoDB" id="7409at2157"/>
<dbReference type="UniPathway" id="UPA00940"/>
<dbReference type="Proteomes" id="UP000002593">
    <property type="component" value="Chromosome"/>
</dbReference>
<dbReference type="GO" id="GO:0005737">
    <property type="term" value="C:cytoplasm"/>
    <property type="evidence" value="ECO:0007669"/>
    <property type="project" value="UniProtKB-SubCell"/>
</dbReference>
<dbReference type="GO" id="GO:0000287">
    <property type="term" value="F:magnesium ion binding"/>
    <property type="evidence" value="ECO:0007669"/>
    <property type="project" value="UniProtKB-UniRule"/>
</dbReference>
<dbReference type="GO" id="GO:0047294">
    <property type="term" value="F:phosphoglycerol geranylgeranyltransferase activity"/>
    <property type="evidence" value="ECO:0007669"/>
    <property type="project" value="UniProtKB-UniRule"/>
</dbReference>
<dbReference type="GO" id="GO:0046474">
    <property type="term" value="P:glycerophospholipid biosynthetic process"/>
    <property type="evidence" value="ECO:0007669"/>
    <property type="project" value="UniProtKB-UniRule"/>
</dbReference>
<dbReference type="Gene3D" id="3.20.20.390">
    <property type="entry name" value="FMN-linked oxidoreductases"/>
    <property type="match status" value="1"/>
</dbReference>
<dbReference type="HAMAP" id="MF_00112">
    <property type="entry name" value="GGGP_HepGP_synthase"/>
    <property type="match status" value="1"/>
</dbReference>
<dbReference type="InterPro" id="IPR039074">
    <property type="entry name" value="GGGP/HepGP_synthase_I"/>
</dbReference>
<dbReference type="InterPro" id="IPR038597">
    <property type="entry name" value="GGGP/HepGP_synthase_sf"/>
</dbReference>
<dbReference type="InterPro" id="IPR008205">
    <property type="entry name" value="GGGP_HepGP_synthase"/>
</dbReference>
<dbReference type="InterPro" id="IPR010946">
    <property type="entry name" value="GGGP_synth"/>
</dbReference>
<dbReference type="NCBIfam" id="TIGR01769">
    <property type="entry name" value="GGGP"/>
    <property type="match status" value="1"/>
</dbReference>
<dbReference type="NCBIfam" id="TIGR01768">
    <property type="entry name" value="GGGP-family"/>
    <property type="match status" value="1"/>
</dbReference>
<dbReference type="NCBIfam" id="NF003198">
    <property type="entry name" value="PRK04169.1-2"/>
    <property type="match status" value="1"/>
</dbReference>
<dbReference type="PANTHER" id="PTHR40029">
    <property type="match status" value="1"/>
</dbReference>
<dbReference type="PANTHER" id="PTHR40029:SF2">
    <property type="entry name" value="HEPTAPRENYLGLYCERYL PHOSPHATE SYNTHASE"/>
    <property type="match status" value="1"/>
</dbReference>
<dbReference type="Pfam" id="PF01884">
    <property type="entry name" value="PcrB"/>
    <property type="match status" value="1"/>
</dbReference>
<dbReference type="SUPFAM" id="SSF51395">
    <property type="entry name" value="FMN-linked oxidoreductases"/>
    <property type="match status" value="1"/>
</dbReference>
<organism>
    <name type="scientific">Hyperthermus butylicus (strain DSM 5456 / JCM 9403 / PLM1-5)</name>
    <dbReference type="NCBI Taxonomy" id="415426"/>
    <lineage>
        <taxon>Archaea</taxon>
        <taxon>Thermoproteota</taxon>
        <taxon>Thermoprotei</taxon>
        <taxon>Desulfurococcales</taxon>
        <taxon>Pyrodictiaceae</taxon>
        <taxon>Hyperthermus</taxon>
    </lineage>
</organism>
<keyword id="KW-0963">Cytoplasm</keyword>
<keyword id="KW-0444">Lipid biosynthesis</keyword>
<keyword id="KW-0443">Lipid metabolism</keyword>
<keyword id="KW-0460">Magnesium</keyword>
<keyword id="KW-0479">Metal-binding</keyword>
<keyword id="KW-0594">Phospholipid biosynthesis</keyword>
<keyword id="KW-1208">Phospholipid metabolism</keyword>
<keyword id="KW-1185">Reference proteome</keyword>
<keyword id="KW-0808">Transferase</keyword>
<comment type="function">
    <text evidence="1">Prenyltransferase that catalyzes the transfer of the geranylgeranyl moiety of geranylgeranyl diphosphate (GGPP) to the C3 hydroxyl of sn-glycerol-1-phosphate (G1P). This reaction is the first ether-bond-formation step in the biosynthesis of archaeal membrane lipids.</text>
</comment>
<comment type="catalytic activity">
    <reaction evidence="1">
        <text>sn-glycerol 1-phosphate + (2E,6E,10E)-geranylgeranyl diphosphate = sn-3-O-(geranylgeranyl)glycerol 1-phosphate + diphosphate</text>
        <dbReference type="Rhea" id="RHEA:23404"/>
        <dbReference type="ChEBI" id="CHEBI:33019"/>
        <dbReference type="ChEBI" id="CHEBI:57677"/>
        <dbReference type="ChEBI" id="CHEBI:57685"/>
        <dbReference type="ChEBI" id="CHEBI:58756"/>
        <dbReference type="EC" id="2.5.1.41"/>
    </reaction>
</comment>
<comment type="cofactor">
    <cofactor evidence="1">
        <name>Mg(2+)</name>
        <dbReference type="ChEBI" id="CHEBI:18420"/>
    </cofactor>
</comment>
<comment type="pathway">
    <text evidence="1">Membrane lipid metabolism; glycerophospholipid metabolism.</text>
</comment>
<comment type="subcellular location">
    <subcellularLocation>
        <location evidence="1">Cytoplasm</location>
    </subcellularLocation>
</comment>
<comment type="similarity">
    <text evidence="1">Belongs to the GGGP/HepGP synthase family. Group II subfamily.</text>
</comment>
<feature type="chain" id="PRO_0000350675" description="Geranylgeranylglyceryl phosphate synthase">
    <location>
        <begin position="1"/>
        <end position="241"/>
    </location>
</feature>
<feature type="binding site" evidence="1">
    <location>
        <position position="26"/>
    </location>
    <ligand>
        <name>Mg(2+)</name>
        <dbReference type="ChEBI" id="CHEBI:18420"/>
    </ligand>
</feature>
<feature type="binding site" evidence="1">
    <location>
        <position position="52"/>
    </location>
    <ligand>
        <name>Mg(2+)</name>
        <dbReference type="ChEBI" id="CHEBI:18420"/>
    </ligand>
</feature>
<feature type="binding site" evidence="1">
    <location>
        <begin position="172"/>
        <end position="178"/>
    </location>
    <ligand>
        <name>sn-glycerol 1-phosphate</name>
        <dbReference type="ChEBI" id="CHEBI:57685"/>
    </ligand>
</feature>
<feature type="binding site" evidence="1">
    <location>
        <begin position="204"/>
        <end position="205"/>
    </location>
    <ligand>
        <name>sn-glycerol 1-phosphate</name>
        <dbReference type="ChEBI" id="CHEBI:57685"/>
    </ligand>
</feature>
<feature type="binding site" evidence="1">
    <location>
        <begin position="226"/>
        <end position="227"/>
    </location>
    <ligand>
        <name>sn-glycerol 1-phosphate</name>
        <dbReference type="ChEBI" id="CHEBI:57685"/>
    </ligand>
</feature>
<proteinExistence type="inferred from homology"/>
<sequence length="241" mass="25407">MKLGKVERLLRSRVESGEKLFLLLSDPEKPISPNTVKLFEENGADVLLIGGSLNVTPYDIDEYIARLRVEGVKLPIVLFPGGLNNIAKSADAILFMTLMNSMDPYWIVGAQVAAAPIVYRLGLEAIPSAYIIVGHGGAAGHIGRALPIPYENGYIAAAYALAAEYLGARLVYFEAGSGAPKPVPVDAVAAASKVLSQALLVVGGGIREETLAAERLKAGADGVVIGTLAEKDPEKALRSSR</sequence>